<comment type="function">
    <text evidence="1">Catalyzes the sequential decarboxylation of the four acetate side chains of uroporphyrinogen to form coproporphyrinogen and participates in the fifth step in the heme biosynthetic pathway. Isomer I or isomer III of uroporphyrinogen may serve as substrate, but only coproporphyrinogen III can ultimately be converted to heme. In vitro also decarboxylates pentacarboxylate porphyrinogen I.</text>
</comment>
<comment type="catalytic activity">
    <reaction evidence="1">
        <text>uroporphyrinogen III + 4 H(+) = coproporphyrinogen III + 4 CO2</text>
        <dbReference type="Rhea" id="RHEA:19865"/>
        <dbReference type="ChEBI" id="CHEBI:15378"/>
        <dbReference type="ChEBI" id="CHEBI:16526"/>
        <dbReference type="ChEBI" id="CHEBI:57308"/>
        <dbReference type="ChEBI" id="CHEBI:57309"/>
        <dbReference type="EC" id="4.1.1.37"/>
    </reaction>
    <physiologicalReaction direction="left-to-right" evidence="1">
        <dbReference type="Rhea" id="RHEA:19866"/>
    </physiologicalReaction>
</comment>
<comment type="catalytic activity">
    <reaction evidence="1">
        <text>uroporphyrinogen I + 4 H(+) = coproporphyrinogen I + 4 CO2</text>
        <dbReference type="Rhea" id="RHEA:31239"/>
        <dbReference type="ChEBI" id="CHEBI:15378"/>
        <dbReference type="ChEBI" id="CHEBI:16526"/>
        <dbReference type="ChEBI" id="CHEBI:62626"/>
        <dbReference type="ChEBI" id="CHEBI:62631"/>
    </reaction>
    <physiologicalReaction direction="left-to-right" evidence="1">
        <dbReference type="Rhea" id="RHEA:31240"/>
    </physiologicalReaction>
</comment>
<comment type="pathway">
    <text evidence="1">Porphyrin-containing compound metabolism; protoporphyrin-IX biosynthesis; coproporphyrinogen-III from 5-aminolevulinate: step 4/4.</text>
</comment>
<comment type="subunit">
    <text evidence="1">Homodimer.</text>
</comment>
<comment type="subcellular location">
    <subcellularLocation>
        <location evidence="2">Cytoplasm</location>
        <location evidence="2">Cytosol</location>
    </subcellularLocation>
</comment>
<comment type="similarity">
    <text evidence="3">Belongs to the uroporphyrinogen decarboxylase family.</text>
</comment>
<feature type="chain" id="PRO_0000230308" description="Uroporphyrinogen decarboxylase">
    <location>
        <begin position="1"/>
        <end position="367"/>
    </location>
</feature>
<feature type="binding site" evidence="1">
    <location>
        <position position="37"/>
    </location>
    <ligand>
        <name>coproporphyrinogen I</name>
        <dbReference type="ChEBI" id="CHEBI:62631"/>
    </ligand>
</feature>
<feature type="binding site" evidence="1">
    <location>
        <position position="37"/>
    </location>
    <ligand>
        <name>coproporphyrinogen III</name>
        <dbReference type="ChEBI" id="CHEBI:57309"/>
    </ligand>
</feature>
<feature type="binding site" evidence="1">
    <location>
        <position position="39"/>
    </location>
    <ligand>
        <name>coproporphyrinogen I</name>
        <dbReference type="ChEBI" id="CHEBI:62631"/>
    </ligand>
</feature>
<feature type="binding site" evidence="1">
    <location>
        <position position="39"/>
    </location>
    <ligand>
        <name>coproporphyrinogen III</name>
        <dbReference type="ChEBI" id="CHEBI:57309"/>
    </ligand>
</feature>
<feature type="binding site" evidence="1">
    <location>
        <position position="41"/>
    </location>
    <ligand>
        <name>coproporphyrinogen I</name>
        <dbReference type="ChEBI" id="CHEBI:62631"/>
    </ligand>
</feature>
<feature type="binding site" evidence="1">
    <location>
        <position position="41"/>
    </location>
    <ligand>
        <name>coproporphyrinogen III</name>
        <dbReference type="ChEBI" id="CHEBI:57309"/>
    </ligand>
</feature>
<feature type="binding site" evidence="1">
    <location>
        <position position="50"/>
    </location>
    <ligand>
        <name>coproporphyrinogen I</name>
        <dbReference type="ChEBI" id="CHEBI:62631"/>
    </ligand>
</feature>
<feature type="binding site" evidence="1">
    <location>
        <position position="86"/>
    </location>
    <ligand>
        <name>coproporphyrinogen I</name>
        <dbReference type="ChEBI" id="CHEBI:62631"/>
    </ligand>
</feature>
<feature type="binding site" evidence="1">
    <location>
        <position position="86"/>
    </location>
    <ligand>
        <name>coproporphyrinogen III</name>
        <dbReference type="ChEBI" id="CHEBI:57309"/>
    </ligand>
</feature>
<feature type="binding site" evidence="1">
    <location>
        <position position="164"/>
    </location>
    <ligand>
        <name>coproporphyrinogen I</name>
        <dbReference type="ChEBI" id="CHEBI:62631"/>
    </ligand>
</feature>
<feature type="binding site" evidence="1">
    <location>
        <position position="164"/>
    </location>
    <ligand>
        <name>coproporphyrinogen III</name>
        <dbReference type="ChEBI" id="CHEBI:57309"/>
    </ligand>
</feature>
<feature type="binding site" evidence="1">
    <location>
        <position position="219"/>
    </location>
    <ligand>
        <name>coproporphyrinogen I</name>
        <dbReference type="ChEBI" id="CHEBI:62631"/>
    </ligand>
</feature>
<feature type="binding site" evidence="1">
    <location>
        <position position="219"/>
    </location>
    <ligand>
        <name>coproporphyrinogen III</name>
        <dbReference type="ChEBI" id="CHEBI:57309"/>
    </ligand>
</feature>
<feature type="binding site" evidence="1">
    <location>
        <position position="339"/>
    </location>
    <ligand>
        <name>coproporphyrinogen I</name>
        <dbReference type="ChEBI" id="CHEBI:62631"/>
    </ligand>
</feature>
<feature type="binding site" evidence="1">
    <location>
        <position position="339"/>
    </location>
    <ligand>
        <name>coproporphyrinogen III</name>
        <dbReference type="ChEBI" id="CHEBI:57309"/>
    </ligand>
</feature>
<feature type="site" description="Transition state stabilizer" evidence="1">
    <location>
        <position position="86"/>
    </location>
</feature>
<feature type="modified residue" description="N-acetylmethionine" evidence="1">
    <location>
        <position position="1"/>
    </location>
</feature>
<gene>
    <name evidence="1" type="primary">UROD</name>
</gene>
<reference key="1">
    <citation type="submission" date="2004-11" db="EMBL/GenBank/DDBJ databases">
        <authorList>
            <consortium name="The German cDNA consortium"/>
        </authorList>
    </citation>
    <scope>NUCLEOTIDE SEQUENCE [LARGE SCALE MRNA]</scope>
    <source>
        <tissue>Brain cortex</tissue>
    </source>
</reference>
<name>DCUP_PONAB</name>
<dbReference type="EC" id="4.1.1.37" evidence="1"/>
<dbReference type="EMBL" id="CR857901">
    <property type="protein sequence ID" value="CAH90152.1"/>
    <property type="molecule type" value="mRNA"/>
</dbReference>
<dbReference type="RefSeq" id="NP_001129018.1">
    <property type="nucleotide sequence ID" value="NM_001135546.1"/>
</dbReference>
<dbReference type="SMR" id="Q5RDK5"/>
<dbReference type="FunCoup" id="Q5RDK5">
    <property type="interactions" value="1922"/>
</dbReference>
<dbReference type="STRING" id="9601.ENSPPYP00000001644"/>
<dbReference type="GeneID" id="100190859"/>
<dbReference type="KEGG" id="pon:100190859"/>
<dbReference type="CTD" id="7389"/>
<dbReference type="eggNOG" id="KOG2872">
    <property type="taxonomic scope" value="Eukaryota"/>
</dbReference>
<dbReference type="InParanoid" id="Q5RDK5"/>
<dbReference type="OrthoDB" id="339900at2759"/>
<dbReference type="UniPathway" id="UPA00251">
    <property type="reaction ID" value="UER00321"/>
</dbReference>
<dbReference type="Proteomes" id="UP000001595">
    <property type="component" value="Unplaced"/>
</dbReference>
<dbReference type="GO" id="GO:0005829">
    <property type="term" value="C:cytosol"/>
    <property type="evidence" value="ECO:0007669"/>
    <property type="project" value="UniProtKB-SubCell"/>
</dbReference>
<dbReference type="GO" id="GO:0004853">
    <property type="term" value="F:uroporphyrinogen decarboxylase activity"/>
    <property type="evidence" value="ECO:0000250"/>
    <property type="project" value="UniProtKB"/>
</dbReference>
<dbReference type="GO" id="GO:0006787">
    <property type="term" value="P:porphyrin-containing compound catabolic process"/>
    <property type="evidence" value="ECO:0000250"/>
    <property type="project" value="UniProtKB"/>
</dbReference>
<dbReference type="GO" id="GO:0006782">
    <property type="term" value="P:protoporphyrinogen IX biosynthetic process"/>
    <property type="evidence" value="ECO:0007669"/>
    <property type="project" value="UniProtKB-UniPathway"/>
</dbReference>
<dbReference type="CDD" id="cd00717">
    <property type="entry name" value="URO-D"/>
    <property type="match status" value="1"/>
</dbReference>
<dbReference type="FunFam" id="3.20.20.210:FF:000008">
    <property type="entry name" value="Uroporphyrinogen decarboxylase"/>
    <property type="match status" value="1"/>
</dbReference>
<dbReference type="Gene3D" id="3.20.20.210">
    <property type="match status" value="1"/>
</dbReference>
<dbReference type="HAMAP" id="MF_00218">
    <property type="entry name" value="URO_D"/>
    <property type="match status" value="1"/>
</dbReference>
<dbReference type="InterPro" id="IPR038071">
    <property type="entry name" value="UROD/MetE-like_sf"/>
</dbReference>
<dbReference type="InterPro" id="IPR006361">
    <property type="entry name" value="Uroporphyrinogen_deCO2ase_HemE"/>
</dbReference>
<dbReference type="InterPro" id="IPR000257">
    <property type="entry name" value="Uroporphyrinogen_deCOase"/>
</dbReference>
<dbReference type="NCBIfam" id="TIGR01464">
    <property type="entry name" value="hemE"/>
    <property type="match status" value="1"/>
</dbReference>
<dbReference type="PANTHER" id="PTHR21091">
    <property type="entry name" value="METHYLTETRAHYDROFOLATE:HOMOCYSTEINE METHYLTRANSFERASE RELATED"/>
    <property type="match status" value="1"/>
</dbReference>
<dbReference type="PANTHER" id="PTHR21091:SF169">
    <property type="entry name" value="UROPORPHYRINOGEN DECARBOXYLASE"/>
    <property type="match status" value="1"/>
</dbReference>
<dbReference type="Pfam" id="PF01208">
    <property type="entry name" value="URO-D"/>
    <property type="match status" value="1"/>
</dbReference>
<dbReference type="SUPFAM" id="SSF51726">
    <property type="entry name" value="UROD/MetE-like"/>
    <property type="match status" value="1"/>
</dbReference>
<dbReference type="PROSITE" id="PS00906">
    <property type="entry name" value="UROD_1"/>
    <property type="match status" value="1"/>
</dbReference>
<dbReference type="PROSITE" id="PS00907">
    <property type="entry name" value="UROD_2"/>
    <property type="match status" value="1"/>
</dbReference>
<evidence type="ECO:0000250" key="1">
    <source>
        <dbReference type="UniProtKB" id="P06132"/>
    </source>
</evidence>
<evidence type="ECO:0000250" key="2">
    <source>
        <dbReference type="UniProtKB" id="P70697"/>
    </source>
</evidence>
<evidence type="ECO:0000305" key="3"/>
<organism>
    <name type="scientific">Pongo abelii</name>
    <name type="common">Sumatran orangutan</name>
    <name type="synonym">Pongo pygmaeus abelii</name>
    <dbReference type="NCBI Taxonomy" id="9601"/>
    <lineage>
        <taxon>Eukaryota</taxon>
        <taxon>Metazoa</taxon>
        <taxon>Chordata</taxon>
        <taxon>Craniata</taxon>
        <taxon>Vertebrata</taxon>
        <taxon>Euteleostomi</taxon>
        <taxon>Mammalia</taxon>
        <taxon>Eutheria</taxon>
        <taxon>Euarchontoglires</taxon>
        <taxon>Primates</taxon>
        <taxon>Haplorrhini</taxon>
        <taxon>Catarrhini</taxon>
        <taxon>Hominidae</taxon>
        <taxon>Pongo</taxon>
    </lineage>
</organism>
<sequence length="367" mass="40721">MEANGLGPQGFPELKNDTFLRAAWGEETDYTPVWCMRQAGRYLPEFRETRAAQDFFSTCRSPEACCEPTLQPLRRFPLDAAIIFSDILVVPQALGMEVTMVPGKGPSFPEPLREEQDLECLRDPEVVASELDYVFQAITLTRQRLAGRVPLIGFAGAPWTLMTYMVEGGGSSTMAQAKRWLYQRPQASHQLLRILTDALVPYLVGQVAAGAQALQLFESHAGHLGPQLFSKFALPYIRDVAKQVKARLREAGLAPVPMIIFAKDGHFALEELAQAGYEVVGLDWTVAPKKARECVGKTVTLQGNLDPCALYASEEEIGQLVKQMLDDFGPHRYIANLGHGLYPDMDPEHVGAFVDAVHKHSRLLRQN</sequence>
<protein>
    <recommendedName>
        <fullName evidence="1">Uroporphyrinogen decarboxylase</fullName>
        <shortName>UPD</shortName>
        <shortName>URO-D</shortName>
        <ecNumber evidence="1">4.1.1.37</ecNumber>
    </recommendedName>
</protein>
<accession>Q5RDK5</accession>
<proteinExistence type="evidence at transcript level"/>
<keyword id="KW-0007">Acetylation</keyword>
<keyword id="KW-0963">Cytoplasm</keyword>
<keyword id="KW-0210">Decarboxylase</keyword>
<keyword id="KW-0350">Heme biosynthesis</keyword>
<keyword id="KW-0456">Lyase</keyword>
<keyword id="KW-0627">Porphyrin biosynthesis</keyword>
<keyword id="KW-1185">Reference proteome</keyword>